<proteinExistence type="inferred from homology"/>
<keyword id="KW-0249">Electron transport</keyword>
<keyword id="KW-0349">Heme</keyword>
<keyword id="KW-0408">Iron</keyword>
<keyword id="KW-0472">Membrane</keyword>
<keyword id="KW-0479">Metal-binding</keyword>
<keyword id="KW-0496">Mitochondrion</keyword>
<keyword id="KW-0999">Mitochondrion inner membrane</keyword>
<keyword id="KW-0679">Respiratory chain</keyword>
<keyword id="KW-0812">Transmembrane</keyword>
<keyword id="KW-1133">Transmembrane helix</keyword>
<keyword id="KW-0813">Transport</keyword>
<keyword id="KW-0830">Ubiquinone</keyword>
<protein>
    <recommendedName>
        <fullName>Cytochrome b</fullName>
    </recommendedName>
    <alternativeName>
        <fullName>Complex III subunit 3</fullName>
    </alternativeName>
    <alternativeName>
        <fullName>Complex III subunit III</fullName>
    </alternativeName>
    <alternativeName>
        <fullName>Cytochrome b-c1 complex subunit 3</fullName>
    </alternativeName>
    <alternativeName>
        <fullName>Ubiquinol-cytochrome-c reductase complex cytochrome b subunit</fullName>
    </alternativeName>
</protein>
<organism>
    <name type="scientific">Madoqua guentheri</name>
    <name type="common">Guenther's dik-dik</name>
    <dbReference type="NCBI Taxonomy" id="66433"/>
    <lineage>
        <taxon>Eukaryota</taxon>
        <taxon>Metazoa</taxon>
        <taxon>Chordata</taxon>
        <taxon>Craniata</taxon>
        <taxon>Vertebrata</taxon>
        <taxon>Euteleostomi</taxon>
        <taxon>Mammalia</taxon>
        <taxon>Eutheria</taxon>
        <taxon>Laurasiatheria</taxon>
        <taxon>Artiodactyla</taxon>
        <taxon>Ruminantia</taxon>
        <taxon>Pecora</taxon>
        <taxon>Bovidae</taxon>
        <taxon>Antilopinae</taxon>
        <taxon>Madoqua</taxon>
    </lineage>
</organism>
<evidence type="ECO:0000250" key="1"/>
<evidence type="ECO:0000250" key="2">
    <source>
        <dbReference type="UniProtKB" id="P00157"/>
    </source>
</evidence>
<evidence type="ECO:0000255" key="3">
    <source>
        <dbReference type="PROSITE-ProRule" id="PRU00967"/>
    </source>
</evidence>
<evidence type="ECO:0000255" key="4">
    <source>
        <dbReference type="PROSITE-ProRule" id="PRU00968"/>
    </source>
</evidence>
<sequence length="379" mass="42485">MTNIRKTHPLMKIVNNAFIDLPAPSNISSWWNFGSLLGVCLILQILTGLFLAMHYTADTATAFSSVTHICRDVNYGWIIRYMHANGASMFFICLFMHVGRGLYYGSYTFLETWNVGVILLFATMATAFMGYCLPWGQMSFWGATVITNLLSAIPYIGTNLVEWIWGGFSVDKATLTRFFAFHFILPFIIAALAMVHLLFLHETGSNSPTGISSDADEIPFRPYYTIKDILGALLLIMGLMLLVLFSPDLLGDPDNYTPANPLNTPPHIKPEWYFLFAYAILRSIPNKLGGVLALVLSILILSLHTLIHTSKQRSMMFRPISQCLFWILVADLLTLTWIGGQPVEHPYIIIGQLASILYFTLILVLMPVASTIGNNLLKW</sequence>
<feature type="chain" id="PRO_0000061147" description="Cytochrome b">
    <location>
        <begin position="1"/>
        <end position="379"/>
    </location>
</feature>
<feature type="transmembrane region" description="Helical" evidence="2">
    <location>
        <begin position="33"/>
        <end position="53"/>
    </location>
</feature>
<feature type="transmembrane region" description="Helical" evidence="2">
    <location>
        <begin position="77"/>
        <end position="98"/>
    </location>
</feature>
<feature type="transmembrane region" description="Helical" evidence="2">
    <location>
        <begin position="113"/>
        <end position="133"/>
    </location>
</feature>
<feature type="transmembrane region" description="Helical" evidence="2">
    <location>
        <begin position="178"/>
        <end position="198"/>
    </location>
</feature>
<feature type="transmembrane region" description="Helical" evidence="2">
    <location>
        <begin position="226"/>
        <end position="246"/>
    </location>
</feature>
<feature type="transmembrane region" description="Helical" evidence="2">
    <location>
        <begin position="288"/>
        <end position="308"/>
    </location>
</feature>
<feature type="transmembrane region" description="Helical" evidence="2">
    <location>
        <begin position="320"/>
        <end position="340"/>
    </location>
</feature>
<feature type="transmembrane region" description="Helical" evidence="2">
    <location>
        <begin position="347"/>
        <end position="367"/>
    </location>
</feature>
<feature type="binding site" description="axial binding residue" evidence="2">
    <location>
        <position position="83"/>
    </location>
    <ligand>
        <name>heme b</name>
        <dbReference type="ChEBI" id="CHEBI:60344"/>
        <label>b562</label>
    </ligand>
    <ligandPart>
        <name>Fe</name>
        <dbReference type="ChEBI" id="CHEBI:18248"/>
    </ligandPart>
</feature>
<feature type="binding site" description="axial binding residue" evidence="2">
    <location>
        <position position="97"/>
    </location>
    <ligand>
        <name>heme b</name>
        <dbReference type="ChEBI" id="CHEBI:60344"/>
        <label>b566</label>
    </ligand>
    <ligandPart>
        <name>Fe</name>
        <dbReference type="ChEBI" id="CHEBI:18248"/>
    </ligandPart>
</feature>
<feature type="binding site" description="axial binding residue" evidence="2">
    <location>
        <position position="182"/>
    </location>
    <ligand>
        <name>heme b</name>
        <dbReference type="ChEBI" id="CHEBI:60344"/>
        <label>b562</label>
    </ligand>
    <ligandPart>
        <name>Fe</name>
        <dbReference type="ChEBI" id="CHEBI:18248"/>
    </ligandPart>
</feature>
<feature type="binding site" description="axial binding residue" evidence="2">
    <location>
        <position position="196"/>
    </location>
    <ligand>
        <name>heme b</name>
        <dbReference type="ChEBI" id="CHEBI:60344"/>
        <label>b566</label>
    </ligand>
    <ligandPart>
        <name>Fe</name>
        <dbReference type="ChEBI" id="CHEBI:18248"/>
    </ligandPart>
</feature>
<feature type="binding site" evidence="2">
    <location>
        <position position="201"/>
    </location>
    <ligand>
        <name>a ubiquinone</name>
        <dbReference type="ChEBI" id="CHEBI:16389"/>
    </ligand>
</feature>
<reference key="1">
    <citation type="journal article" date="1999" name="Mol. Phylogenet. Evol.">
        <title>Cytochrome b phylogeny of the family bovidae: resolution within the alcelaphini, antilopini, neotragini, and tragelaphini.</title>
        <authorList>
            <person name="Matthee C.A."/>
            <person name="Robinson T.J."/>
        </authorList>
    </citation>
    <scope>NUCLEOTIDE SEQUENCE [GENOMIC DNA]</scope>
</reference>
<comment type="function">
    <text evidence="2">Component of the ubiquinol-cytochrome c reductase complex (complex III or cytochrome b-c1 complex) that is part of the mitochondrial respiratory chain. The b-c1 complex mediates electron transfer from ubiquinol to cytochrome c. Contributes to the generation of a proton gradient across the mitochondrial membrane that is then used for ATP synthesis.</text>
</comment>
<comment type="cofactor">
    <cofactor evidence="2">
        <name>heme b</name>
        <dbReference type="ChEBI" id="CHEBI:60344"/>
    </cofactor>
    <text evidence="2">Binds 2 heme b groups non-covalently.</text>
</comment>
<comment type="subunit">
    <text evidence="2">The cytochrome bc1 complex contains 11 subunits: 3 respiratory subunits (MT-CYB, CYC1 and UQCRFS1), 2 core proteins (UQCRC1 and UQCRC2) and 6 low-molecular weight proteins (UQCRH/QCR6, UQCRB/QCR7, UQCRQ/QCR8, UQCR10/QCR9, UQCR11/QCR10 and a cleavage product of UQCRFS1). This cytochrome bc1 complex then forms a dimer.</text>
</comment>
<comment type="subcellular location">
    <subcellularLocation>
        <location evidence="2">Mitochondrion inner membrane</location>
        <topology evidence="2">Multi-pass membrane protein</topology>
    </subcellularLocation>
</comment>
<comment type="miscellaneous">
    <text evidence="1">Heme 1 (or BL or b562) is low-potential and absorbs at about 562 nm, and heme 2 (or BH or b566) is high-potential and absorbs at about 566 nm.</text>
</comment>
<comment type="similarity">
    <text evidence="3 4">Belongs to the cytochrome b family.</text>
</comment>
<comment type="caution">
    <text evidence="2">The full-length protein contains only eight transmembrane helices, not nine as predicted by bioinformatics tools.</text>
</comment>
<geneLocation type="mitochondrion"/>
<gene>
    <name type="primary">MT-CYB</name>
    <name type="synonym">COB</name>
    <name type="synonym">CYTB</name>
    <name type="synonym">MTCYB</name>
</gene>
<accession>O47721</accession>
<dbReference type="EMBL" id="AF022071">
    <property type="protein sequence ID" value="AAD13505.1"/>
    <property type="molecule type" value="Genomic_DNA"/>
</dbReference>
<dbReference type="SMR" id="O47721"/>
<dbReference type="GO" id="GO:0005743">
    <property type="term" value="C:mitochondrial inner membrane"/>
    <property type="evidence" value="ECO:0007669"/>
    <property type="project" value="UniProtKB-SubCell"/>
</dbReference>
<dbReference type="GO" id="GO:0045275">
    <property type="term" value="C:respiratory chain complex III"/>
    <property type="evidence" value="ECO:0007669"/>
    <property type="project" value="InterPro"/>
</dbReference>
<dbReference type="GO" id="GO:0046872">
    <property type="term" value="F:metal ion binding"/>
    <property type="evidence" value="ECO:0007669"/>
    <property type="project" value="UniProtKB-KW"/>
</dbReference>
<dbReference type="GO" id="GO:0008121">
    <property type="term" value="F:ubiquinol-cytochrome-c reductase activity"/>
    <property type="evidence" value="ECO:0007669"/>
    <property type="project" value="InterPro"/>
</dbReference>
<dbReference type="GO" id="GO:0006122">
    <property type="term" value="P:mitochondrial electron transport, ubiquinol to cytochrome c"/>
    <property type="evidence" value="ECO:0007669"/>
    <property type="project" value="TreeGrafter"/>
</dbReference>
<dbReference type="CDD" id="cd00290">
    <property type="entry name" value="cytochrome_b_C"/>
    <property type="match status" value="1"/>
</dbReference>
<dbReference type="CDD" id="cd00284">
    <property type="entry name" value="Cytochrome_b_N"/>
    <property type="match status" value="1"/>
</dbReference>
<dbReference type="FunFam" id="1.20.810.10:FF:000002">
    <property type="entry name" value="Cytochrome b"/>
    <property type="match status" value="1"/>
</dbReference>
<dbReference type="Gene3D" id="1.20.810.10">
    <property type="entry name" value="Cytochrome Bc1 Complex, Chain C"/>
    <property type="match status" value="1"/>
</dbReference>
<dbReference type="InterPro" id="IPR005798">
    <property type="entry name" value="Cyt_b/b6_C"/>
</dbReference>
<dbReference type="InterPro" id="IPR036150">
    <property type="entry name" value="Cyt_b/b6_C_sf"/>
</dbReference>
<dbReference type="InterPro" id="IPR005797">
    <property type="entry name" value="Cyt_b/b6_N"/>
</dbReference>
<dbReference type="InterPro" id="IPR027387">
    <property type="entry name" value="Cytb/b6-like_sf"/>
</dbReference>
<dbReference type="InterPro" id="IPR030689">
    <property type="entry name" value="Cytochrome_b"/>
</dbReference>
<dbReference type="InterPro" id="IPR048260">
    <property type="entry name" value="Cytochrome_b_C_euk/bac"/>
</dbReference>
<dbReference type="InterPro" id="IPR048259">
    <property type="entry name" value="Cytochrome_b_N_euk/bac"/>
</dbReference>
<dbReference type="InterPro" id="IPR016174">
    <property type="entry name" value="Di-haem_cyt_TM"/>
</dbReference>
<dbReference type="PANTHER" id="PTHR19271">
    <property type="entry name" value="CYTOCHROME B"/>
    <property type="match status" value="1"/>
</dbReference>
<dbReference type="PANTHER" id="PTHR19271:SF16">
    <property type="entry name" value="CYTOCHROME B"/>
    <property type="match status" value="1"/>
</dbReference>
<dbReference type="Pfam" id="PF00032">
    <property type="entry name" value="Cytochrom_B_C"/>
    <property type="match status" value="1"/>
</dbReference>
<dbReference type="Pfam" id="PF00033">
    <property type="entry name" value="Cytochrome_B"/>
    <property type="match status" value="1"/>
</dbReference>
<dbReference type="PIRSF" id="PIRSF038885">
    <property type="entry name" value="COB"/>
    <property type="match status" value="1"/>
</dbReference>
<dbReference type="SUPFAM" id="SSF81648">
    <property type="entry name" value="a domain/subunit of cytochrome bc1 complex (Ubiquinol-cytochrome c reductase)"/>
    <property type="match status" value="1"/>
</dbReference>
<dbReference type="SUPFAM" id="SSF81342">
    <property type="entry name" value="Transmembrane di-heme cytochromes"/>
    <property type="match status" value="1"/>
</dbReference>
<dbReference type="PROSITE" id="PS51003">
    <property type="entry name" value="CYTB_CTER"/>
    <property type="match status" value="1"/>
</dbReference>
<dbReference type="PROSITE" id="PS51002">
    <property type="entry name" value="CYTB_NTER"/>
    <property type="match status" value="1"/>
</dbReference>
<name>CYB_MADGU</name>